<protein>
    <recommendedName>
        <fullName evidence="1">NAD-dependent protein deacylase</fullName>
        <ecNumber evidence="1 2">2.3.1.286</ecNumber>
    </recommendedName>
    <alternativeName>
        <fullName evidence="1">Regulatory protein SIR2 homolog</fullName>
    </alternativeName>
</protein>
<sequence length="255" mass="29147">MPKLVVFSGAGLSAESGLETFRDNGGLWAQYDPMEVCNYENWLDNFELVHRFYNLRREELGKVQPNAMHKFLASLPMILNKPRIALSAKKKHKDPIEVIHITQNVDDLLERAGVSNVIHLHGELCKIICPQCEHIFDIGYTHFEPHNCPNCDYGKLKPFIVFFYERAPKYVIMHDIFSQLSSKDCVLVIGTSGNVVDISTILAFAESRARIGYKILNNLQYCPSIAESVFDKIFYKPTTQAIAEIEQELEQFFIS</sequence>
<gene>
    <name evidence="1" type="primary">cobB</name>
    <name type="ordered locus">HH_0572</name>
</gene>
<name>NPD_HELHP</name>
<accession>Q7VIN2</accession>
<keyword id="KW-0963">Cytoplasm</keyword>
<keyword id="KW-0479">Metal-binding</keyword>
<keyword id="KW-0520">NAD</keyword>
<keyword id="KW-1185">Reference proteome</keyword>
<keyword id="KW-0808">Transferase</keyword>
<keyword id="KW-0862">Zinc</keyword>
<reference key="1">
    <citation type="journal article" date="2003" name="Proc. Natl. Acad. Sci. U.S.A.">
        <title>The complete genome sequence of the carcinogenic bacterium Helicobacter hepaticus.</title>
        <authorList>
            <person name="Suerbaum S."/>
            <person name="Josenhans C."/>
            <person name="Sterzenbach T."/>
            <person name="Drescher B."/>
            <person name="Brandt P."/>
            <person name="Bell M."/>
            <person name="Droege M."/>
            <person name="Fartmann B."/>
            <person name="Fischer H.-P."/>
            <person name="Ge Z."/>
            <person name="Hoerster A."/>
            <person name="Holland R."/>
            <person name="Klein K."/>
            <person name="Koenig J."/>
            <person name="Macko L."/>
            <person name="Mendz G.L."/>
            <person name="Nyakatura G."/>
            <person name="Schauer D.B."/>
            <person name="Shen Z."/>
            <person name="Weber J."/>
            <person name="Frosch M."/>
            <person name="Fox J.G."/>
        </authorList>
    </citation>
    <scope>NUCLEOTIDE SEQUENCE [LARGE SCALE GENOMIC DNA]</scope>
    <source>
        <strain>ATCC 51449 / 3B1</strain>
    </source>
</reference>
<feature type="chain" id="PRO_0000110319" description="NAD-dependent protein deacylase">
    <location>
        <begin position="1"/>
        <end position="255"/>
    </location>
</feature>
<feature type="domain" description="Deacetylase sirtuin-type" evidence="2">
    <location>
        <begin position="1"/>
        <end position="252"/>
    </location>
</feature>
<feature type="active site" description="Proton acceptor" evidence="2">
    <location>
        <position position="121"/>
    </location>
</feature>
<feature type="binding site" evidence="1">
    <location>
        <begin position="9"/>
        <end position="28"/>
    </location>
    <ligand>
        <name>NAD(+)</name>
        <dbReference type="ChEBI" id="CHEBI:57540"/>
    </ligand>
</feature>
<feature type="binding site" evidence="1">
    <location>
        <position position="53"/>
    </location>
    <ligand>
        <name>substrate</name>
    </ligand>
</feature>
<feature type="binding site" evidence="1">
    <location>
        <position position="56"/>
    </location>
    <ligand>
        <name>substrate</name>
    </ligand>
</feature>
<feature type="binding site" evidence="1">
    <location>
        <begin position="103"/>
        <end position="106"/>
    </location>
    <ligand>
        <name>NAD(+)</name>
        <dbReference type="ChEBI" id="CHEBI:57540"/>
    </ligand>
</feature>
<feature type="binding site" evidence="1">
    <location>
        <position position="129"/>
    </location>
    <ligand>
        <name>Zn(2+)</name>
        <dbReference type="ChEBI" id="CHEBI:29105"/>
    </ligand>
</feature>
<feature type="binding site" evidence="1">
    <location>
        <position position="132"/>
    </location>
    <ligand>
        <name>Zn(2+)</name>
        <dbReference type="ChEBI" id="CHEBI:29105"/>
    </ligand>
</feature>
<feature type="binding site" evidence="1">
    <location>
        <position position="148"/>
    </location>
    <ligand>
        <name>Zn(2+)</name>
        <dbReference type="ChEBI" id="CHEBI:29105"/>
    </ligand>
</feature>
<feature type="binding site" evidence="1">
    <location>
        <position position="151"/>
    </location>
    <ligand>
        <name>Zn(2+)</name>
        <dbReference type="ChEBI" id="CHEBI:29105"/>
    </ligand>
</feature>
<feature type="binding site" evidence="1">
    <location>
        <begin position="190"/>
        <end position="192"/>
    </location>
    <ligand>
        <name>NAD(+)</name>
        <dbReference type="ChEBI" id="CHEBI:57540"/>
    </ligand>
</feature>
<feature type="binding site" evidence="1">
    <location>
        <begin position="218"/>
        <end position="220"/>
    </location>
    <ligand>
        <name>NAD(+)</name>
        <dbReference type="ChEBI" id="CHEBI:57540"/>
    </ligand>
</feature>
<feature type="binding site" evidence="1">
    <location>
        <position position="238"/>
    </location>
    <ligand>
        <name>NAD(+)</name>
        <dbReference type="ChEBI" id="CHEBI:57540"/>
    </ligand>
</feature>
<evidence type="ECO:0000255" key="1">
    <source>
        <dbReference type="HAMAP-Rule" id="MF_01121"/>
    </source>
</evidence>
<evidence type="ECO:0000255" key="2">
    <source>
        <dbReference type="PROSITE-ProRule" id="PRU00236"/>
    </source>
</evidence>
<organism>
    <name type="scientific">Helicobacter hepaticus (strain ATCC 51449 / 3B1)</name>
    <dbReference type="NCBI Taxonomy" id="235279"/>
    <lineage>
        <taxon>Bacteria</taxon>
        <taxon>Pseudomonadati</taxon>
        <taxon>Campylobacterota</taxon>
        <taxon>Epsilonproteobacteria</taxon>
        <taxon>Campylobacterales</taxon>
        <taxon>Helicobacteraceae</taxon>
        <taxon>Helicobacter</taxon>
    </lineage>
</organism>
<comment type="function">
    <text evidence="1">NAD-dependent lysine deacetylase and desuccinylase that specifically removes acetyl and succinyl groups on target proteins. Modulates the activities of several proteins which are inactive in their acylated form.</text>
</comment>
<comment type="catalytic activity">
    <reaction evidence="1">
        <text>N(6)-acetyl-L-lysyl-[protein] + NAD(+) + H2O = 2''-O-acetyl-ADP-D-ribose + nicotinamide + L-lysyl-[protein]</text>
        <dbReference type="Rhea" id="RHEA:43636"/>
        <dbReference type="Rhea" id="RHEA-COMP:9752"/>
        <dbReference type="Rhea" id="RHEA-COMP:10731"/>
        <dbReference type="ChEBI" id="CHEBI:15377"/>
        <dbReference type="ChEBI" id="CHEBI:17154"/>
        <dbReference type="ChEBI" id="CHEBI:29969"/>
        <dbReference type="ChEBI" id="CHEBI:57540"/>
        <dbReference type="ChEBI" id="CHEBI:61930"/>
        <dbReference type="ChEBI" id="CHEBI:83767"/>
        <dbReference type="EC" id="2.3.1.286"/>
    </reaction>
</comment>
<comment type="catalytic activity">
    <reaction evidence="1">
        <text>N(6)-succinyl-L-lysyl-[protein] + NAD(+) + H2O = 2''-O-succinyl-ADP-D-ribose + nicotinamide + L-lysyl-[protein]</text>
        <dbReference type="Rhea" id="RHEA:47668"/>
        <dbReference type="Rhea" id="RHEA-COMP:9752"/>
        <dbReference type="Rhea" id="RHEA-COMP:11877"/>
        <dbReference type="ChEBI" id="CHEBI:15377"/>
        <dbReference type="ChEBI" id="CHEBI:17154"/>
        <dbReference type="ChEBI" id="CHEBI:29969"/>
        <dbReference type="ChEBI" id="CHEBI:57540"/>
        <dbReference type="ChEBI" id="CHEBI:87830"/>
        <dbReference type="ChEBI" id="CHEBI:87832"/>
    </reaction>
</comment>
<comment type="cofactor">
    <cofactor evidence="1">
        <name>Zn(2+)</name>
        <dbReference type="ChEBI" id="CHEBI:29105"/>
    </cofactor>
    <text evidence="1">Binds 1 zinc ion per subunit.</text>
</comment>
<comment type="subcellular location">
    <subcellularLocation>
        <location evidence="1">Cytoplasm</location>
    </subcellularLocation>
</comment>
<comment type="domain">
    <text evidence="1">2 residues (Tyr-53 and Arg-56) present in a large hydrophobic pocket are probably involved in substrate specificity. They are important for desuccinylation activity, but dispensable for deacetylation activity.</text>
</comment>
<comment type="similarity">
    <text evidence="1">Belongs to the sirtuin family. Class III subfamily.</text>
</comment>
<dbReference type="EC" id="2.3.1.286" evidence="1 2"/>
<dbReference type="EMBL" id="AE017125">
    <property type="protein sequence ID" value="AAP77169.1"/>
    <property type="molecule type" value="Genomic_DNA"/>
</dbReference>
<dbReference type="RefSeq" id="WP_011115414.1">
    <property type="nucleotide sequence ID" value="NC_004917.1"/>
</dbReference>
<dbReference type="SMR" id="Q7VIN2"/>
<dbReference type="STRING" id="235279.HH_0572"/>
<dbReference type="KEGG" id="hhe:HH_0572"/>
<dbReference type="eggNOG" id="COG0846">
    <property type="taxonomic scope" value="Bacteria"/>
</dbReference>
<dbReference type="HOGENOM" id="CLU_023643_3_1_7"/>
<dbReference type="OrthoDB" id="9800582at2"/>
<dbReference type="Proteomes" id="UP000002495">
    <property type="component" value="Chromosome"/>
</dbReference>
<dbReference type="GO" id="GO:0005737">
    <property type="term" value="C:cytoplasm"/>
    <property type="evidence" value="ECO:0007669"/>
    <property type="project" value="UniProtKB-SubCell"/>
</dbReference>
<dbReference type="GO" id="GO:0017136">
    <property type="term" value="F:histone deacetylase activity, NAD-dependent"/>
    <property type="evidence" value="ECO:0007669"/>
    <property type="project" value="TreeGrafter"/>
</dbReference>
<dbReference type="GO" id="GO:0046872">
    <property type="term" value="F:metal ion binding"/>
    <property type="evidence" value="ECO:0007669"/>
    <property type="project" value="UniProtKB-KW"/>
</dbReference>
<dbReference type="GO" id="GO:0070403">
    <property type="term" value="F:NAD+ binding"/>
    <property type="evidence" value="ECO:0007669"/>
    <property type="project" value="UniProtKB-UniRule"/>
</dbReference>
<dbReference type="GO" id="GO:0036054">
    <property type="term" value="F:protein-malonyllysine demalonylase activity"/>
    <property type="evidence" value="ECO:0007669"/>
    <property type="project" value="InterPro"/>
</dbReference>
<dbReference type="GO" id="GO:0036055">
    <property type="term" value="F:protein-succinyllysine desuccinylase activity"/>
    <property type="evidence" value="ECO:0007669"/>
    <property type="project" value="UniProtKB-UniRule"/>
</dbReference>
<dbReference type="Gene3D" id="3.30.1600.10">
    <property type="entry name" value="SIR2/SIRT2 'Small Domain"/>
    <property type="match status" value="1"/>
</dbReference>
<dbReference type="Gene3D" id="3.40.50.1220">
    <property type="entry name" value="TPP-binding domain"/>
    <property type="match status" value="1"/>
</dbReference>
<dbReference type="HAMAP" id="MF_01121">
    <property type="entry name" value="Sirtuin_ClassIII"/>
    <property type="match status" value="1"/>
</dbReference>
<dbReference type="InterPro" id="IPR029035">
    <property type="entry name" value="DHS-like_NAD/FAD-binding_dom"/>
</dbReference>
<dbReference type="InterPro" id="IPR050134">
    <property type="entry name" value="NAD-dep_sirtuin_deacylases"/>
</dbReference>
<dbReference type="InterPro" id="IPR003000">
    <property type="entry name" value="Sirtuin"/>
</dbReference>
<dbReference type="InterPro" id="IPR026591">
    <property type="entry name" value="Sirtuin_cat_small_dom_sf"/>
</dbReference>
<dbReference type="InterPro" id="IPR027546">
    <property type="entry name" value="Sirtuin_class_III"/>
</dbReference>
<dbReference type="InterPro" id="IPR026590">
    <property type="entry name" value="Ssirtuin_cat_dom"/>
</dbReference>
<dbReference type="PANTHER" id="PTHR11085:SF4">
    <property type="entry name" value="NAD-DEPENDENT PROTEIN DEACYLASE"/>
    <property type="match status" value="1"/>
</dbReference>
<dbReference type="PANTHER" id="PTHR11085">
    <property type="entry name" value="NAD-DEPENDENT PROTEIN DEACYLASE SIRTUIN-5, MITOCHONDRIAL-RELATED"/>
    <property type="match status" value="1"/>
</dbReference>
<dbReference type="Pfam" id="PF02146">
    <property type="entry name" value="SIR2"/>
    <property type="match status" value="1"/>
</dbReference>
<dbReference type="SUPFAM" id="SSF52467">
    <property type="entry name" value="DHS-like NAD/FAD-binding domain"/>
    <property type="match status" value="1"/>
</dbReference>
<dbReference type="PROSITE" id="PS50305">
    <property type="entry name" value="SIRTUIN"/>
    <property type="match status" value="1"/>
</dbReference>
<proteinExistence type="inferred from homology"/>